<evidence type="ECO:0000250" key="1">
    <source>
        <dbReference type="UniProtKB" id="Q7TQ33"/>
    </source>
</evidence>
<evidence type="ECO:0000255" key="2"/>
<evidence type="ECO:0000255" key="3">
    <source>
        <dbReference type="PROSITE-ProRule" id="PRU00498"/>
    </source>
</evidence>
<evidence type="ECO:0000269" key="4">
    <source>
    </source>
</evidence>
<evidence type="ECO:0000269" key="5">
    <source>
    </source>
</evidence>
<evidence type="ECO:0000305" key="6"/>
<evidence type="ECO:0000312" key="7">
    <source>
        <dbReference type="Proteomes" id="UP000001940"/>
    </source>
</evidence>
<evidence type="ECO:0000312" key="8">
    <source>
        <dbReference type="WormBase" id="Y71G12B.16"/>
    </source>
</evidence>
<reference key="1">
    <citation type="journal article" date="2010" name="Development">
        <title>The RGM protein DRAG-1 positively regulates a BMP-like signaling pathway in Caenorhabditis elegans.</title>
        <authorList>
            <person name="Tian C."/>
            <person name="Sen D."/>
            <person name="Shi H."/>
            <person name="Foehr M.L."/>
            <person name="Plavskin Y."/>
            <person name="Vatamaniuk O.K."/>
            <person name="Liu J."/>
        </authorList>
    </citation>
    <scope>NUCLEOTIDE SEQUENCE [MRNA]</scope>
    <scope>FUNCTION</scope>
    <scope>SUBCELLULAR LOCATION</scope>
    <scope>TISSUE SPECIFICITY</scope>
    <scope>DEVELOPMENTAL STAGE</scope>
    <scope>DISRUPTION PHENOTYPE</scope>
</reference>
<reference evidence="7" key="2">
    <citation type="journal article" date="1998" name="Science">
        <title>Genome sequence of the nematode C. elegans: a platform for investigating biology.</title>
        <authorList>
            <consortium name="The C. elegans sequencing consortium"/>
        </authorList>
    </citation>
    <scope>NUCLEOTIDE SEQUENCE [LARGE SCALE GENOMIC DNA]</scope>
    <source>
        <strain evidence="7">Bristol N2</strain>
    </source>
</reference>
<reference evidence="6" key="3">
    <citation type="journal article" date="2013" name="Development">
        <title>The neogenin/DCC homolog UNC-40 promotes BMP signaling via the RGM protein DRAG-1 in C. elegans.</title>
        <authorList>
            <person name="Tian C."/>
            <person name="Shi H."/>
            <person name="Xiong S."/>
            <person name="Hu F."/>
            <person name="Xiong W.C."/>
            <person name="Liu J."/>
        </authorList>
    </citation>
    <scope>FUNCTION</scope>
    <scope>INTERACTION WITH UNC-40; DBL-1 AND SMA-6</scope>
    <scope>DISRUPTION PHENOTYPE</scope>
    <scope>MUTAGENESIS OF GLY-68; ASP-127 AND GLY-272</scope>
</reference>
<name>RGMB_CAEEL</name>
<organism evidence="7">
    <name type="scientific">Caenorhabditis elegans</name>
    <dbReference type="NCBI Taxonomy" id="6239"/>
    <lineage>
        <taxon>Eukaryota</taxon>
        <taxon>Metazoa</taxon>
        <taxon>Ecdysozoa</taxon>
        <taxon>Nematoda</taxon>
        <taxon>Chromadorea</taxon>
        <taxon>Rhabditida</taxon>
        <taxon>Rhabditina</taxon>
        <taxon>Rhabditomorpha</taxon>
        <taxon>Rhabditoidea</taxon>
        <taxon>Rhabditidae</taxon>
        <taxon>Peloderinae</taxon>
        <taxon>Caenorhabditis</taxon>
    </lineage>
</organism>
<protein>
    <recommendedName>
        <fullName evidence="6">Repulsive guidance molecule B homolog drag-1</fullName>
    </recommendedName>
    <alternativeName>
        <fullName evidence="8">DRAGON homolog</fullName>
    </alternativeName>
</protein>
<sequence>MSIVYLVSITFIFSVFKPITSCRVEECAAWFQKTKDYENLVPKATERYCQVLQTYLKCMNDTQRYCHGNLRFHSSELIMRRHWKEFECEKWESCNDNSHVKRKHVNTCYFNPPPSNRKLKYCSLFGDPHLIMFNGSVQTCSEEGARPLVDNRYFLVQVTNRNVRGEALTTTVTKVTVLVRKHNCTASLRYEASSDEEGLPRGFVDGTTFQMTSKHSVEVLWQDDNYVEIALHFIHSSIHIRRQGPYLSVSVRAPTIVLETGGDVARELCWSGCRKSSRIPAELAVEMTKKFAECYRRRVHVPKKVAEDRCKDIGNIGVFFDACVFDLMFTGDDYLVHLSRAAESDFRRLAPHHFQSHVTQQHARFQKENQHKNHINQSEIFKKCIPSKSIRFYPFLAIFFFALLSLLC</sequence>
<comment type="function">
    <text evidence="4 5">Probably in association with the cell surface receptor unc-40, positively modulates the BMP-like Sma/Mab signaling pathway through interaction with both the ligand dbl-1 and its type I receptor sma-6 (PubMed:24004951). Regulates body size and this may be through modulation of the Sma/Mab signaling pathway (PubMed:20534671, PubMed:24004951).</text>
</comment>
<comment type="subunit">
    <text evidence="5">Interacts with unc-40 (via FN6 domain), dbl-1 and sma-6.</text>
</comment>
<comment type="subcellular location">
    <subcellularLocation>
        <location evidence="4">Cell membrane</location>
        <topology evidence="1">Lipid-anchor</topology>
        <topology evidence="1">GPI-anchor</topology>
    </subcellularLocation>
</comment>
<comment type="tissue specificity">
    <text evidence="4">Expressed in pharyngeal, hypodermal and intestinal cells.</text>
</comment>
<comment type="developmental stage">
    <text evidence="4">Expressed from the 1-M to 4-M stage of mesodermal M lineage development during the larval development.</text>
</comment>
<comment type="disruption phenotype">
    <text evidence="4 5">Smaller body size compared to wild-type.</text>
</comment>
<comment type="similarity">
    <text evidence="6">Belongs to the repulsive guidance molecule (RGM) family.</text>
</comment>
<dbReference type="EMBL" id="HM154523">
    <property type="protein sequence ID" value="ADI88500.1"/>
    <property type="molecule type" value="mRNA"/>
</dbReference>
<dbReference type="EMBL" id="HM154524">
    <property type="protein sequence ID" value="ADI88501.1"/>
    <property type="molecule type" value="mRNA"/>
</dbReference>
<dbReference type="EMBL" id="BX284601">
    <property type="protein sequence ID" value="CCD67994.1"/>
    <property type="molecule type" value="Genomic_DNA"/>
</dbReference>
<dbReference type="RefSeq" id="NP_490881.4">
    <property type="nucleotide sequence ID" value="NM_058480.6"/>
</dbReference>
<dbReference type="SMR" id="G5EDE5"/>
<dbReference type="FunCoup" id="G5EDE5">
    <property type="interactions" value="318"/>
</dbReference>
<dbReference type="STRING" id="6239.Y71G12B.16.1"/>
<dbReference type="GlyCosmos" id="G5EDE5">
    <property type="glycosylation" value="4 sites, No reported glycans"/>
</dbReference>
<dbReference type="PaxDb" id="6239-Y71G12B.16"/>
<dbReference type="EnsemblMetazoa" id="Y71G12B.16.1">
    <property type="protein sequence ID" value="Y71G12B.16.1"/>
    <property type="gene ID" value="WBGene00022154"/>
</dbReference>
<dbReference type="GeneID" id="190602"/>
<dbReference type="KEGG" id="cel:CELE_Y71G12B.16"/>
<dbReference type="AGR" id="WB:WBGene00022154"/>
<dbReference type="CTD" id="190602"/>
<dbReference type="WormBase" id="Y71G12B.16">
    <property type="protein sequence ID" value="CE45612"/>
    <property type="gene ID" value="WBGene00022154"/>
    <property type="gene designation" value="drag-1"/>
</dbReference>
<dbReference type="eggNOG" id="ENOG502QSTJ">
    <property type="taxonomic scope" value="Eukaryota"/>
</dbReference>
<dbReference type="GeneTree" id="ENSGT00950000183112"/>
<dbReference type="HOGENOM" id="CLU_032775_1_1_1"/>
<dbReference type="InParanoid" id="G5EDE5"/>
<dbReference type="OMA" id="CDYESRA"/>
<dbReference type="OrthoDB" id="10013795at2759"/>
<dbReference type="PhylomeDB" id="G5EDE5"/>
<dbReference type="PRO" id="PR:G5EDE5"/>
<dbReference type="Proteomes" id="UP000001940">
    <property type="component" value="Chromosome I"/>
</dbReference>
<dbReference type="Bgee" id="WBGene00022154">
    <property type="expression patterns" value="Expressed in pharyngeal muscle cell (C elegans) and 3 other cell types or tissues"/>
</dbReference>
<dbReference type="GO" id="GO:0005886">
    <property type="term" value="C:plasma membrane"/>
    <property type="evidence" value="ECO:0000315"/>
    <property type="project" value="WormBase"/>
</dbReference>
<dbReference type="GO" id="GO:0043235">
    <property type="term" value="C:receptor complex"/>
    <property type="evidence" value="ECO:0000353"/>
    <property type="project" value="WormBase"/>
</dbReference>
<dbReference type="GO" id="GO:0098552">
    <property type="term" value="C:side of membrane"/>
    <property type="evidence" value="ECO:0007669"/>
    <property type="project" value="UniProtKB-KW"/>
</dbReference>
<dbReference type="GO" id="GO:0015026">
    <property type="term" value="F:coreceptor activity"/>
    <property type="evidence" value="ECO:0000318"/>
    <property type="project" value="GO_Central"/>
</dbReference>
<dbReference type="GO" id="GO:0030509">
    <property type="term" value="P:BMP signaling pathway"/>
    <property type="evidence" value="ECO:0000318"/>
    <property type="project" value="GO_Central"/>
</dbReference>
<dbReference type="GO" id="GO:0007501">
    <property type="term" value="P:mesodermal cell fate specification"/>
    <property type="evidence" value="ECO:0000315"/>
    <property type="project" value="WormBase"/>
</dbReference>
<dbReference type="GO" id="GO:0040018">
    <property type="term" value="P:positive regulation of multicellular organism growth"/>
    <property type="evidence" value="ECO:0000315"/>
    <property type="project" value="UniProtKB"/>
</dbReference>
<dbReference type="GO" id="GO:0030510">
    <property type="term" value="P:regulation of BMP signaling pathway"/>
    <property type="evidence" value="ECO:0000316"/>
    <property type="project" value="WormBase"/>
</dbReference>
<dbReference type="GO" id="GO:0061065">
    <property type="term" value="P:regulation of dauer larval development"/>
    <property type="evidence" value="ECO:0000316"/>
    <property type="project" value="WormBase"/>
</dbReference>
<dbReference type="GO" id="GO:0040014">
    <property type="term" value="P:regulation of multicellular organism growth"/>
    <property type="evidence" value="ECO:0000315"/>
    <property type="project" value="WormBase"/>
</dbReference>
<dbReference type="Gene3D" id="3.40.1000.10">
    <property type="entry name" value="Mog1/PsbP, alpha/beta/alpha sandwich"/>
    <property type="match status" value="1"/>
</dbReference>
<dbReference type="InterPro" id="IPR040287">
    <property type="entry name" value="RGM"/>
</dbReference>
<dbReference type="InterPro" id="IPR009496">
    <property type="entry name" value="RGM_C"/>
</dbReference>
<dbReference type="InterPro" id="IPR010536">
    <property type="entry name" value="RGM_N"/>
</dbReference>
<dbReference type="PANTHER" id="PTHR31428:SF6">
    <property type="entry name" value="REPULSIVE GUIDANCE MOLECULE B HOMOLOG DRAG-1"/>
    <property type="match status" value="1"/>
</dbReference>
<dbReference type="PANTHER" id="PTHR31428">
    <property type="entry name" value="RGM DOMAIN FAMILY MEMBER DRAG-1"/>
    <property type="match status" value="1"/>
</dbReference>
<dbReference type="Pfam" id="PF06534">
    <property type="entry name" value="RGM_C"/>
    <property type="match status" value="1"/>
</dbReference>
<dbReference type="Pfam" id="PF06535">
    <property type="entry name" value="RGM_N"/>
    <property type="match status" value="1"/>
</dbReference>
<proteinExistence type="evidence at protein level"/>
<accession>G5EDE5</accession>
<gene>
    <name evidence="8" type="primary">drag-1</name>
    <name evidence="8" type="ORF">Y71G12B.16</name>
</gene>
<keyword id="KW-1003">Cell membrane</keyword>
<keyword id="KW-0325">Glycoprotein</keyword>
<keyword id="KW-0336">GPI-anchor</keyword>
<keyword id="KW-0449">Lipoprotein</keyword>
<keyword id="KW-0472">Membrane</keyword>
<keyword id="KW-1185">Reference proteome</keyword>
<keyword id="KW-0732">Signal</keyword>
<keyword id="KW-0812">Transmembrane</keyword>
<keyword id="KW-1133">Transmembrane helix</keyword>
<feature type="signal peptide" evidence="2">
    <location>
        <begin position="1"/>
        <end position="22"/>
    </location>
</feature>
<feature type="chain" id="PRO_5007191963" description="Repulsive guidance molecule B homolog drag-1" evidence="6">
    <location>
        <begin position="23"/>
        <end position="408"/>
    </location>
</feature>
<feature type="topological domain" description="Extracellular" evidence="6">
    <location>
        <begin position="23"/>
        <end position="387"/>
    </location>
</feature>
<feature type="transmembrane region" description="Helical" evidence="2">
    <location>
        <begin position="388"/>
        <end position="408"/>
    </location>
</feature>
<feature type="glycosylation site" description="N-linked (GlcNAc...) asparagine" evidence="3">
    <location>
        <position position="60"/>
    </location>
</feature>
<feature type="glycosylation site" description="N-linked (GlcNAc...) asparagine" evidence="3">
    <location>
        <position position="134"/>
    </location>
</feature>
<feature type="glycosylation site" description="N-linked (GlcNAc...) asparagine" evidence="3">
    <location>
        <position position="183"/>
    </location>
</feature>
<feature type="glycosylation site" description="N-linked (GlcNAc...) asparagine" evidence="3">
    <location>
        <position position="376"/>
    </location>
</feature>
<feature type="mutagenesis site" description="Reduced function, and only partially rescues the small body phenotype of the null mutant." evidence="5">
    <original>G</original>
    <variation>V</variation>
    <location>
        <position position="68"/>
    </location>
</feature>
<feature type="mutagenesis site" description="Rescues small body size phenotype of null mutants." evidence="5">
    <original>D</original>
    <variation>E</variation>
    <location>
        <position position="127"/>
    </location>
</feature>
<feature type="mutagenesis site" description="Loss of function and reduced binding to unc-40." evidence="5">
    <original>G</original>
    <variation>V</variation>
    <location>
        <position position="272"/>
    </location>
</feature>